<gene>
    <name evidence="1" type="primary">rpmE</name>
    <name evidence="1" type="synonym">rpl31</name>
    <name type="ordered locus">NE1036</name>
</gene>
<keyword id="KW-0479">Metal-binding</keyword>
<keyword id="KW-1185">Reference proteome</keyword>
<keyword id="KW-0687">Ribonucleoprotein</keyword>
<keyword id="KW-0689">Ribosomal protein</keyword>
<keyword id="KW-0694">RNA-binding</keyword>
<keyword id="KW-0699">rRNA-binding</keyword>
<keyword id="KW-0862">Zinc</keyword>
<protein>
    <recommendedName>
        <fullName evidence="1">Large ribosomal subunit protein bL31</fullName>
    </recommendedName>
    <alternativeName>
        <fullName evidence="2">50S ribosomal protein L31</fullName>
    </alternativeName>
</protein>
<organism>
    <name type="scientific">Nitrosomonas europaea (strain ATCC 19718 / CIP 103999 / KCTC 2705 / NBRC 14298)</name>
    <dbReference type="NCBI Taxonomy" id="228410"/>
    <lineage>
        <taxon>Bacteria</taxon>
        <taxon>Pseudomonadati</taxon>
        <taxon>Pseudomonadota</taxon>
        <taxon>Betaproteobacteria</taxon>
        <taxon>Nitrosomonadales</taxon>
        <taxon>Nitrosomonadaceae</taxon>
        <taxon>Nitrosomonas</taxon>
    </lineage>
</organism>
<evidence type="ECO:0000255" key="1">
    <source>
        <dbReference type="HAMAP-Rule" id="MF_00501"/>
    </source>
</evidence>
<evidence type="ECO:0000305" key="2"/>
<comment type="function">
    <text evidence="1">Binds the 23S rRNA.</text>
</comment>
<comment type="cofactor">
    <cofactor evidence="1">
        <name>Zn(2+)</name>
        <dbReference type="ChEBI" id="CHEBI:29105"/>
    </cofactor>
    <text evidence="1">Binds 1 zinc ion per subunit.</text>
</comment>
<comment type="subunit">
    <text evidence="1">Part of the 50S ribosomal subunit.</text>
</comment>
<comment type="similarity">
    <text evidence="1">Belongs to the bacterial ribosomal protein bL31 family. Type A subfamily.</text>
</comment>
<proteinExistence type="inferred from homology"/>
<sequence>MKEGIHPEYHEITVTCSCGNEFKTRSVLSKPLHIEVCSSCHPFYTGKQKIVDTAGRVEKFNQKYGRHLQKQAQT</sequence>
<dbReference type="EMBL" id="AL954747">
    <property type="protein sequence ID" value="CAD84947.1"/>
    <property type="molecule type" value="Genomic_DNA"/>
</dbReference>
<dbReference type="RefSeq" id="WP_011111645.1">
    <property type="nucleotide sequence ID" value="NC_004757.1"/>
</dbReference>
<dbReference type="SMR" id="Q82VN1"/>
<dbReference type="STRING" id="228410.NE1036"/>
<dbReference type="GeneID" id="87104227"/>
<dbReference type="KEGG" id="neu:NE1036"/>
<dbReference type="eggNOG" id="COG0254">
    <property type="taxonomic scope" value="Bacteria"/>
</dbReference>
<dbReference type="HOGENOM" id="CLU_114306_4_0_4"/>
<dbReference type="OrthoDB" id="9803251at2"/>
<dbReference type="PhylomeDB" id="Q82VN1"/>
<dbReference type="Proteomes" id="UP000001416">
    <property type="component" value="Chromosome"/>
</dbReference>
<dbReference type="GO" id="GO:1990904">
    <property type="term" value="C:ribonucleoprotein complex"/>
    <property type="evidence" value="ECO:0007669"/>
    <property type="project" value="UniProtKB-KW"/>
</dbReference>
<dbReference type="GO" id="GO:0005840">
    <property type="term" value="C:ribosome"/>
    <property type="evidence" value="ECO:0007669"/>
    <property type="project" value="UniProtKB-KW"/>
</dbReference>
<dbReference type="GO" id="GO:0046872">
    <property type="term" value="F:metal ion binding"/>
    <property type="evidence" value="ECO:0007669"/>
    <property type="project" value="UniProtKB-KW"/>
</dbReference>
<dbReference type="GO" id="GO:0019843">
    <property type="term" value="F:rRNA binding"/>
    <property type="evidence" value="ECO:0007669"/>
    <property type="project" value="UniProtKB-KW"/>
</dbReference>
<dbReference type="GO" id="GO:0003735">
    <property type="term" value="F:structural constituent of ribosome"/>
    <property type="evidence" value="ECO:0007669"/>
    <property type="project" value="InterPro"/>
</dbReference>
<dbReference type="GO" id="GO:0006412">
    <property type="term" value="P:translation"/>
    <property type="evidence" value="ECO:0007669"/>
    <property type="project" value="UniProtKB-UniRule"/>
</dbReference>
<dbReference type="Gene3D" id="4.10.830.30">
    <property type="entry name" value="Ribosomal protein L31"/>
    <property type="match status" value="1"/>
</dbReference>
<dbReference type="HAMAP" id="MF_00501">
    <property type="entry name" value="Ribosomal_bL31_1"/>
    <property type="match status" value="1"/>
</dbReference>
<dbReference type="InterPro" id="IPR034704">
    <property type="entry name" value="Ribosomal_bL28/bL31-like_sf"/>
</dbReference>
<dbReference type="InterPro" id="IPR002150">
    <property type="entry name" value="Ribosomal_bL31"/>
</dbReference>
<dbReference type="InterPro" id="IPR027491">
    <property type="entry name" value="Ribosomal_bL31_A"/>
</dbReference>
<dbReference type="InterPro" id="IPR042105">
    <property type="entry name" value="Ribosomal_bL31_sf"/>
</dbReference>
<dbReference type="NCBIfam" id="TIGR00105">
    <property type="entry name" value="L31"/>
    <property type="match status" value="1"/>
</dbReference>
<dbReference type="NCBIfam" id="NF000612">
    <property type="entry name" value="PRK00019.1"/>
    <property type="match status" value="1"/>
</dbReference>
<dbReference type="NCBIfam" id="NF001809">
    <property type="entry name" value="PRK00528.1"/>
    <property type="match status" value="1"/>
</dbReference>
<dbReference type="PANTHER" id="PTHR33280">
    <property type="entry name" value="50S RIBOSOMAL PROTEIN L31, CHLOROPLASTIC"/>
    <property type="match status" value="1"/>
</dbReference>
<dbReference type="PANTHER" id="PTHR33280:SF6">
    <property type="entry name" value="LARGE RIBOSOMAL SUBUNIT PROTEIN BL31A"/>
    <property type="match status" value="1"/>
</dbReference>
<dbReference type="Pfam" id="PF01197">
    <property type="entry name" value="Ribosomal_L31"/>
    <property type="match status" value="1"/>
</dbReference>
<dbReference type="PRINTS" id="PR01249">
    <property type="entry name" value="RIBOSOMALL31"/>
</dbReference>
<dbReference type="SUPFAM" id="SSF143800">
    <property type="entry name" value="L28p-like"/>
    <property type="match status" value="1"/>
</dbReference>
<dbReference type="PROSITE" id="PS01143">
    <property type="entry name" value="RIBOSOMAL_L31"/>
    <property type="match status" value="1"/>
</dbReference>
<name>RL31_NITEU</name>
<feature type="chain" id="PRO_0000173137" description="Large ribosomal subunit protein bL31">
    <location>
        <begin position="1"/>
        <end position="74"/>
    </location>
</feature>
<feature type="binding site" evidence="1">
    <location>
        <position position="16"/>
    </location>
    <ligand>
        <name>Zn(2+)</name>
        <dbReference type="ChEBI" id="CHEBI:29105"/>
    </ligand>
</feature>
<feature type="binding site" evidence="1">
    <location>
        <position position="18"/>
    </location>
    <ligand>
        <name>Zn(2+)</name>
        <dbReference type="ChEBI" id="CHEBI:29105"/>
    </ligand>
</feature>
<feature type="binding site" evidence="1">
    <location>
        <position position="37"/>
    </location>
    <ligand>
        <name>Zn(2+)</name>
        <dbReference type="ChEBI" id="CHEBI:29105"/>
    </ligand>
</feature>
<feature type="binding site" evidence="1">
    <location>
        <position position="40"/>
    </location>
    <ligand>
        <name>Zn(2+)</name>
        <dbReference type="ChEBI" id="CHEBI:29105"/>
    </ligand>
</feature>
<reference key="1">
    <citation type="journal article" date="2003" name="J. Bacteriol.">
        <title>Complete genome sequence of the ammonia-oxidizing bacterium and obligate chemolithoautotroph Nitrosomonas europaea.</title>
        <authorList>
            <person name="Chain P."/>
            <person name="Lamerdin J.E."/>
            <person name="Larimer F.W."/>
            <person name="Regala W."/>
            <person name="Lao V."/>
            <person name="Land M.L."/>
            <person name="Hauser L."/>
            <person name="Hooper A.B."/>
            <person name="Klotz M.G."/>
            <person name="Norton J."/>
            <person name="Sayavedra-Soto L.A."/>
            <person name="Arciero D.M."/>
            <person name="Hommes N.G."/>
            <person name="Whittaker M.M."/>
            <person name="Arp D.J."/>
        </authorList>
    </citation>
    <scope>NUCLEOTIDE SEQUENCE [LARGE SCALE GENOMIC DNA]</scope>
    <source>
        <strain>ATCC 19718 / CIP 103999 / KCTC 2705 / NBRC 14298</strain>
    </source>
</reference>
<accession>Q82VN1</accession>